<dbReference type="EMBL" id="Y08501">
    <property type="protein sequence ID" value="CAA69812.1"/>
    <property type="molecule type" value="Genomic_DNA"/>
</dbReference>
<dbReference type="EMBL" id="BK010421">
    <property type="status" value="NOT_ANNOTATED_CDS"/>
    <property type="molecule type" value="Genomic_DNA"/>
</dbReference>
<dbReference type="EMBL" id="AC007729">
    <property type="protein sequence ID" value="AAM15495.1"/>
    <property type="molecule type" value="Genomic_DNA"/>
</dbReference>
<dbReference type="EMBL" id="CP002685">
    <property type="protein sequence ID" value="AEC06082.1"/>
    <property type="molecule type" value="Genomic_DNA"/>
</dbReference>
<dbReference type="RefSeq" id="NP_085580.1">
    <property type="nucleotide sequence ID" value="NC_001284.2"/>
</dbReference>
<dbReference type="RefSeq" id="NP_178786.1">
    <property type="nucleotide sequence ID" value="NM_126745.3"/>
</dbReference>
<dbReference type="SMR" id="P92559"/>
<dbReference type="STRING" id="3702.P92559"/>
<dbReference type="GlyGen" id="P92559">
    <property type="glycosylation" value="1 site"/>
</dbReference>
<dbReference type="PaxDb" id="3702-ATMG01280.1"/>
<dbReference type="ProteomicsDB" id="239033"/>
<dbReference type="EnsemblPlants" id="ATMG01280.1">
    <property type="protein sequence ID" value="ATMG01280.1"/>
    <property type="gene ID" value="ATMG01280"/>
</dbReference>
<dbReference type="GeneID" id="815371"/>
<dbReference type="Gramene" id="ATMG01280.1">
    <property type="protein sequence ID" value="ATMG01280.1"/>
    <property type="gene ID" value="ATMG01280"/>
</dbReference>
<dbReference type="KEGG" id="ath:AT2G07695"/>
<dbReference type="Araport" id="AT2G07695"/>
<dbReference type="Araport" id="ATMG01280"/>
<dbReference type="TAIR" id="AT2G07695"/>
<dbReference type="TAIR" id="ATMG01280">
    <property type="gene designation" value="ORF291"/>
</dbReference>
<dbReference type="eggNOG" id="KOG4767">
    <property type="taxonomic scope" value="Eukaryota"/>
</dbReference>
<dbReference type="HOGENOM" id="CLU_957627_0_0_1"/>
<dbReference type="InParanoid" id="P92559"/>
<dbReference type="OrthoDB" id="539285at2759"/>
<dbReference type="BioCyc" id="ARA:ATMG01280-MONOMER"/>
<dbReference type="PRO" id="PR:P92559"/>
<dbReference type="Proteomes" id="UP000006548">
    <property type="component" value="Chromosome 2"/>
</dbReference>
<dbReference type="Proteomes" id="UP000006548">
    <property type="component" value="Mitochondrion MT"/>
</dbReference>
<dbReference type="ExpressionAtlas" id="P92559">
    <property type="expression patterns" value="baseline and differential"/>
</dbReference>
<dbReference type="GO" id="GO:0031966">
    <property type="term" value="C:mitochondrial membrane"/>
    <property type="evidence" value="ECO:0007669"/>
    <property type="project" value="UniProtKB-SubCell"/>
</dbReference>
<dbReference type="GO" id="GO:0004129">
    <property type="term" value="F:cytochrome-c oxidase activity"/>
    <property type="evidence" value="ECO:0007669"/>
    <property type="project" value="InterPro"/>
</dbReference>
<dbReference type="GO" id="GO:0022900">
    <property type="term" value="P:electron transport chain"/>
    <property type="evidence" value="ECO:0007669"/>
    <property type="project" value="InterPro"/>
</dbReference>
<dbReference type="FunFam" id="1.10.287.90:FF:000004">
    <property type="entry name" value="Cytochrome c oxidase subunit 2"/>
    <property type="match status" value="1"/>
</dbReference>
<dbReference type="Gene3D" id="1.10.287.90">
    <property type="match status" value="1"/>
</dbReference>
<dbReference type="InterPro" id="IPR045187">
    <property type="entry name" value="CcO_II"/>
</dbReference>
<dbReference type="InterPro" id="IPR011759">
    <property type="entry name" value="Cyt_c_oxidase_su2_TM_dom"/>
</dbReference>
<dbReference type="InterPro" id="IPR036257">
    <property type="entry name" value="Cyt_c_oxidase_su2_TM_sf"/>
</dbReference>
<dbReference type="PANTHER" id="PTHR22888:SF9">
    <property type="entry name" value="CYTOCHROME C OXIDASE SUBUNIT 2"/>
    <property type="match status" value="1"/>
</dbReference>
<dbReference type="PANTHER" id="PTHR22888">
    <property type="entry name" value="CYTOCHROME C OXIDASE, SUBUNIT II"/>
    <property type="match status" value="1"/>
</dbReference>
<dbReference type="Pfam" id="PF02790">
    <property type="entry name" value="COX2_TM"/>
    <property type="match status" value="1"/>
</dbReference>
<dbReference type="SUPFAM" id="SSF81464">
    <property type="entry name" value="Cytochrome c oxidase subunit II-like, transmembrane region"/>
    <property type="match status" value="1"/>
</dbReference>
<dbReference type="PROSITE" id="PS50999">
    <property type="entry name" value="COX2_TM"/>
    <property type="match status" value="1"/>
</dbReference>
<protein>
    <recommendedName>
        <fullName>Uncharacterized mitochondrial protein AtMg01280</fullName>
    </recommendedName>
    <alternativeName>
        <fullName>ORF291</fullName>
    </alternativeName>
</protein>
<feature type="chain" id="PRO_0000196823" description="Uncharacterized mitochondrial protein AtMg01280">
    <location>
        <begin position="1"/>
        <end position="291"/>
    </location>
</feature>
<feature type="transmembrane region" description="Helical" evidence="1">
    <location>
        <begin position="42"/>
        <end position="62"/>
    </location>
</feature>
<feature type="transmembrane region" description="Helical" evidence="1">
    <location>
        <begin position="86"/>
        <end position="106"/>
    </location>
</feature>
<feature type="sequence conflict" description="In Ref. 3; AAM15495 and 4; AEC06082." evidence="2" ref="3 4">
    <original>R</original>
    <variation>S</variation>
    <location>
        <position position="133"/>
    </location>
</feature>
<accession>P92559</accession>
<accession>Q1ZXV9</accession>
<accession>Q27GM0</accession>
<accession>Q8S891</accession>
<comment type="subcellular location">
    <subcellularLocation>
        <location evidence="2">Mitochondrion membrane</location>
        <topology evidence="2">Multi-pass membrane protein</topology>
    </subcellularLocation>
</comment>
<comment type="miscellaneous">
    <text>A stretch of 270 kb of the mitochondrial genome is duplicated within the centromere of chromosome 2 resulting in the duplication of the gene. The expression of this duplicated gene (At2g07695) is not demonstrated.</text>
</comment>
<comment type="similarity">
    <text evidence="2">Belongs to the cytochrome c oxidase subunit 2 family.</text>
</comment>
<evidence type="ECO:0000255" key="1"/>
<evidence type="ECO:0000305" key="2"/>
<evidence type="ECO:0000312" key="3">
    <source>
        <dbReference type="Araport" id="AT2G07695"/>
    </source>
</evidence>
<evidence type="ECO:0000312" key="4">
    <source>
        <dbReference type="Araport" id="ATMG01280"/>
    </source>
</evidence>
<geneLocation type="mitochondrion"/>
<organism>
    <name type="scientific">Arabidopsis thaliana</name>
    <name type="common">Mouse-ear cress</name>
    <dbReference type="NCBI Taxonomy" id="3702"/>
    <lineage>
        <taxon>Eukaryota</taxon>
        <taxon>Viridiplantae</taxon>
        <taxon>Streptophyta</taxon>
        <taxon>Embryophyta</taxon>
        <taxon>Tracheophyta</taxon>
        <taxon>Spermatophyta</taxon>
        <taxon>Magnoliopsida</taxon>
        <taxon>eudicotyledons</taxon>
        <taxon>Gunneridae</taxon>
        <taxon>Pentapetalae</taxon>
        <taxon>rosids</taxon>
        <taxon>malvids</taxon>
        <taxon>Brassicales</taxon>
        <taxon>Brassicaceae</taxon>
        <taxon>Camelineae</taxon>
        <taxon>Arabidopsis</taxon>
    </lineage>
</organism>
<gene>
    <name evidence="4" type="ordered locus">AtMg01280</name>
</gene>
<gene>
    <name evidence="3" type="ordered locus">At2g07695</name>
</gene>
<keyword id="KW-0472">Membrane</keyword>
<keyword id="KW-0496">Mitochondrion</keyword>
<keyword id="KW-1185">Reference proteome</keyword>
<keyword id="KW-0812">Transmembrane</keyword>
<keyword id="KW-1133">Transmembrane helix</keyword>
<reference key="1">
    <citation type="journal article" date="1997" name="Nat. Genet.">
        <title>The mitochondrial genome of Arabidopsis thaliana contains 57 genes in 366,924 nucleotides.</title>
        <authorList>
            <person name="Unseld M."/>
            <person name="Marienfeld J.R."/>
            <person name="Brandt P."/>
            <person name="Brennicke A."/>
        </authorList>
    </citation>
    <scope>NUCLEOTIDE SEQUENCE [LARGE SCALE GENOMIC DNA]</scope>
    <source>
        <strain>cv. C24</strain>
    </source>
</reference>
<reference key="2">
    <citation type="journal article" date="2018" name="Plant Cell">
        <title>Correction of persistent errors in Arabidopsis reference mitochondrial genomes.</title>
        <authorList>
            <person name="Sloan D.B."/>
            <person name="Wu Z."/>
            <person name="Sharbrough J."/>
        </authorList>
    </citation>
    <scope>NUCLEOTIDE SEQUENCE [LARGE SCALE GENOMIC DNA]</scope>
    <source>
        <strain>cv. Columbia</strain>
    </source>
</reference>
<reference key="3">
    <citation type="journal article" date="1999" name="Nature">
        <title>Sequence and analysis of chromosome 2 of the plant Arabidopsis thaliana.</title>
        <authorList>
            <person name="Lin X."/>
            <person name="Kaul S."/>
            <person name="Rounsley S.D."/>
            <person name="Shea T.P."/>
            <person name="Benito M.-I."/>
            <person name="Town C.D."/>
            <person name="Fujii C.Y."/>
            <person name="Mason T.M."/>
            <person name="Bowman C.L."/>
            <person name="Barnstead M.E."/>
            <person name="Feldblyum T.V."/>
            <person name="Buell C.R."/>
            <person name="Ketchum K.A."/>
            <person name="Lee J.J."/>
            <person name="Ronning C.M."/>
            <person name="Koo H.L."/>
            <person name="Moffat K.S."/>
            <person name="Cronin L.A."/>
            <person name="Shen M."/>
            <person name="Pai G."/>
            <person name="Van Aken S."/>
            <person name="Umayam L."/>
            <person name="Tallon L.J."/>
            <person name="Gill J.E."/>
            <person name="Adams M.D."/>
            <person name="Carrera A.J."/>
            <person name="Creasy T.H."/>
            <person name="Goodman H.M."/>
            <person name="Somerville C.R."/>
            <person name="Copenhaver G.P."/>
            <person name="Preuss D."/>
            <person name="Nierman W.C."/>
            <person name="White O."/>
            <person name="Eisen J.A."/>
            <person name="Salzberg S.L."/>
            <person name="Fraser C.M."/>
            <person name="Venter J.C."/>
        </authorList>
    </citation>
    <scope>NUCLEOTIDE SEQUENCE [LARGE SCALE GENOMIC DNA] (AT2G07695)</scope>
    <source>
        <strain>cv. Columbia</strain>
    </source>
</reference>
<reference key="4">
    <citation type="journal article" date="2017" name="Plant J.">
        <title>Araport11: a complete reannotation of the Arabidopsis thaliana reference genome.</title>
        <authorList>
            <person name="Cheng C.Y."/>
            <person name="Krishnakumar V."/>
            <person name="Chan A.P."/>
            <person name="Thibaud-Nissen F."/>
            <person name="Schobel S."/>
            <person name="Town C.D."/>
        </authorList>
    </citation>
    <scope>GENOME REANNOTATION</scope>
    <scope>SEQUENCE REVISION (AT2G07695)</scope>
    <source>
        <strain>cv. Columbia</strain>
    </source>
</reference>
<name>M1280_ARATH</name>
<proteinExistence type="inferred from homology"/>
<sequence length="291" mass="33623">MIVLKWLFLTISPCDAAEPWQLGSQDAATPIMQGIIDLHHDIFFFLILILVFVLWILVRALWHFHYKKNAIPQRIVHGTTIEILRTIFPCFISIFIVEPSFALALDDAAEALFPNTAPTPSNTSSSEDSFGLRVLSEPWPITRNLGLESSICNRIRLLEAANSPFLLGKEKGQYWGEIQECLYNVSEQREYYRLLDFENRDLQIRERKHSCLEVFRGVLLRNPYLEERAAYSPQEAFFDFLNERRDALDISNPGSSPAEMDRLEILFLGEIERDLLRRGDESLYIKQLLGD</sequence>